<name>HEMA_I85A2</name>
<comment type="function">
    <text evidence="1">Binds to sialic acid-containing receptors on the cell surface, bringing about the attachment of the virus particle to the cell. This attachment induces virion internalization either through clathrin-dependent endocytosis or through clathrin- and caveolin-independent pathway. Plays a major role in the determination of host range restriction and virulence. Class I viral fusion protein. Responsible for penetration of the virus into the cell cytoplasm by mediating the fusion of the membrane of the endocytosed virus particle with the endosomal membrane. Low pH in endosomes induces an irreversible conformational change in HA2, releasing the fusion hydrophobic peptide. Several trimers are required to form a competent fusion pore.</text>
</comment>
<comment type="subunit">
    <text evidence="1">Homotrimer of disulfide-linked HA1-HA2.</text>
</comment>
<comment type="subcellular location">
    <subcellularLocation>
        <location evidence="1">Virion membrane</location>
        <topology evidence="1">Single-pass type I membrane protein</topology>
    </subcellularLocation>
    <subcellularLocation>
        <location evidence="1">Host apical cell membrane</location>
        <topology evidence="1">Single-pass type I membrane protein</topology>
    </subcellularLocation>
    <text evidence="1">Targeted to the apical plasma membrane in epithelial polarized cells through a signal present in the transmembrane domain. Associated with glycosphingolipid- and cholesterol-enriched detergent-resistant lipid rafts.</text>
</comment>
<comment type="PTM">
    <text evidence="1">Palmitoylated.</text>
</comment>
<comment type="PTM">
    <text evidence="1">In natural infection, inactive HA is matured into HA1 and HA2 outside the cell by one or more trypsin-like, arginine-specific endoprotease secreted by the bronchial epithelial cells. One identified protease that may be involved in this process is secreted in lungs by club cells.</text>
</comment>
<comment type="miscellaneous">
    <text>Major glycoprotein, comprises over 80% of the envelope proteins present in virus particle.</text>
</comment>
<comment type="miscellaneous">
    <text>The extent of infection into host organism is determined by HA. Influenza viruses bud from the apical surface of polarized epithelial cells (e.g. bronchial epithelial cells) into lumen of lungs and are therefore usually pneumotropic. The reason is that HA is cleaved by tryptase clara which is restricted to lungs. However, HAs of H5 and H7 pantropic avian viruses subtypes can be cleaved by furin and subtilisin-type enzymes, allowing the virus to grow in other organs than lungs.</text>
</comment>
<comment type="miscellaneous">
    <text>The influenza A genome consist of 8 RNA segments. Genetic variation of hemagglutinin and/or neuraminidase genes results in the emergence of new influenza strains. The mechanism of variation can be the result of point mutations or the result of genetic reassortment between segments of two different strains.</text>
</comment>
<comment type="similarity">
    <text evidence="1">Belongs to the influenza viruses hemagglutinin family.</text>
</comment>
<reference key="1">
    <citation type="journal article" date="1987" name="Virology">
        <title>Antigenic and genetic conservation of H3 influenza virus in wild ducks.</title>
        <authorList>
            <person name="Kida H."/>
            <person name="Kawaoka Y."/>
            <person name="Naeve C.W."/>
            <person name="Webster R.G."/>
        </authorList>
    </citation>
    <scope>NUCLEOTIDE SEQUENCE [GENOMIC RNA]</scope>
</reference>
<organismHost>
    <name type="scientific">Aves</name>
    <dbReference type="NCBI Taxonomy" id="8782"/>
</organismHost>
<organismHost>
    <name type="scientific">Equus caballus</name>
    <name type="common">Horse</name>
    <dbReference type="NCBI Taxonomy" id="9796"/>
</organismHost>
<evidence type="ECO:0000255" key="1">
    <source>
        <dbReference type="HAMAP-Rule" id="MF_04072"/>
    </source>
</evidence>
<keyword id="KW-1167">Clathrin- and caveolin-independent endocytosis of virus by host</keyword>
<keyword id="KW-1165">Clathrin-mediated endocytosis of virus by host</keyword>
<keyword id="KW-1015">Disulfide bond</keyword>
<keyword id="KW-1170">Fusion of virus membrane with host endosomal membrane</keyword>
<keyword id="KW-1168">Fusion of virus membrane with host membrane</keyword>
<keyword id="KW-0325">Glycoprotein</keyword>
<keyword id="KW-0348">Hemagglutinin</keyword>
<keyword id="KW-1032">Host cell membrane</keyword>
<keyword id="KW-1043">Host membrane</keyword>
<keyword id="KW-0945">Host-virus interaction</keyword>
<keyword id="KW-0449">Lipoprotein</keyword>
<keyword id="KW-0472">Membrane</keyword>
<keyword id="KW-0564">Palmitate</keyword>
<keyword id="KW-0812">Transmembrane</keyword>
<keyword id="KW-1133">Transmembrane helix</keyword>
<keyword id="KW-1161">Viral attachment to host cell</keyword>
<keyword id="KW-0261">Viral envelope protein</keyword>
<keyword id="KW-1162">Viral penetration into host cytoplasm</keyword>
<keyword id="KW-0946">Virion</keyword>
<keyword id="KW-1164">Virus endocytosis by host</keyword>
<keyword id="KW-1160">Virus entry into host cell</keyword>
<proteinExistence type="inferred from homology"/>
<feature type="chain" id="PRO_0000440851" description="Hemagglutinin HA1 chain" evidence="1">
    <location>
        <begin position="1"/>
        <end position="329"/>
    </location>
</feature>
<feature type="chain" id="PRO_0000038929" description="Hemagglutinin HA2 chain" evidence="1">
    <location>
        <begin position="330"/>
        <end position="550"/>
    </location>
</feature>
<feature type="topological domain" description="Extracellular" evidence="1">
    <location>
        <begin position="1"/>
        <end position="514"/>
    </location>
</feature>
<feature type="transmembrane region" description="Helical" evidence="1">
    <location>
        <begin position="515"/>
        <end position="535"/>
    </location>
</feature>
<feature type="topological domain" description="Cytoplasmic" evidence="1">
    <location>
        <begin position="536"/>
        <end position="550"/>
    </location>
</feature>
<feature type="site" description="Cleavage; by host" evidence="1">
    <location>
        <begin position="329"/>
        <end position="330"/>
    </location>
</feature>
<feature type="lipid moiety-binding region" description="S-palmitoyl cysteine; by host" evidence="1">
    <location>
        <position position="539"/>
    </location>
</feature>
<feature type="lipid moiety-binding region" description="S-palmitoyl cysteine; by host" evidence="1">
    <location>
        <position position="546"/>
    </location>
</feature>
<feature type="lipid moiety-binding region" description="S-palmitoyl cysteine; by host" evidence="1">
    <location>
        <position position="549"/>
    </location>
</feature>
<feature type="glycosylation site" description="N-linked (GlcNAc...) asparagine; by host" evidence="1">
    <location>
        <position position="8"/>
    </location>
</feature>
<feature type="glycosylation site" description="N-linked (GlcNAc...) asparagine; by host" evidence="1">
    <location>
        <position position="22"/>
    </location>
</feature>
<feature type="glycosylation site" description="N-linked (GlcNAc...) asparagine; by host" evidence="1">
    <location>
        <position position="38"/>
    </location>
</feature>
<feature type="glycosylation site" description="N-linked (GlcNAc...) asparagine; by host" evidence="1">
    <location>
        <position position="165"/>
    </location>
</feature>
<feature type="glycosylation site" description="N-linked (GlcNAc...) asparagine; by host" evidence="1">
    <location>
        <position position="285"/>
    </location>
</feature>
<feature type="glycosylation site" description="N-linked (GlcNAc...) asparagine; by host" evidence="1">
    <location>
        <position position="483"/>
    </location>
</feature>
<feature type="disulfide bond" description="Interchain (between HA1 and HA2 chains)" evidence="1">
    <location>
        <begin position="14"/>
        <end position="466"/>
    </location>
</feature>
<feature type="disulfide bond" evidence="1">
    <location>
        <begin position="52"/>
        <end position="277"/>
    </location>
</feature>
<feature type="disulfide bond" evidence="1">
    <location>
        <begin position="64"/>
        <end position="76"/>
    </location>
</feature>
<feature type="disulfide bond" evidence="1">
    <location>
        <begin position="97"/>
        <end position="139"/>
    </location>
</feature>
<feature type="disulfide bond" evidence="1">
    <location>
        <begin position="281"/>
        <end position="305"/>
    </location>
</feature>
<feature type="disulfide bond" evidence="1">
    <location>
        <begin position="473"/>
        <end position="477"/>
    </location>
</feature>
<feature type="non-terminal residue">
    <location>
        <position position="1"/>
    </location>
</feature>
<organism>
    <name type="scientific">Influenza A virus (strain A/Duck/Hokkaido/10/1985 H3N8)</name>
    <dbReference type="NCBI Taxonomy" id="11363"/>
    <lineage>
        <taxon>Viruses</taxon>
        <taxon>Riboviria</taxon>
        <taxon>Orthornavirae</taxon>
        <taxon>Negarnaviricota</taxon>
        <taxon>Polyploviricotina</taxon>
        <taxon>Insthoviricetes</taxon>
        <taxon>Articulavirales</taxon>
        <taxon>Orthomyxoviridae</taxon>
        <taxon>Alphainfluenzavirus</taxon>
        <taxon>Alphainfluenzavirus influenzae</taxon>
        <taxon>Influenza A virus</taxon>
    </lineage>
</organism>
<sequence>QDLPGNDNSTATLCLGHHAVPNGTLVKTITDDQIEVTNATELVQSSSTGKICNNPHRILDGRDCTLIDALLGDPHCDVFQDETWDLFVERSNAFSNCYPYDVPDYASLRSLVASSGTLEFITEGFTWTGVTQNGGSNACKRGPNSGFFSRLNWLTKSGSTYPVLNVTMPNNDNFDKLYIWGVHHPSTNQEQTNLYVQASGRVTVSTRRSQQTIIPNIGSRPWVRGQSGRISIYWTVVKPGDVLVINSNGNLIAPRGYFKMRTGKSSIMRSDAPIDTCISECITPNGSIPNDKPFQNVNKITYGACPKYVKQNTLKLATGMRNVPEKQTRGLFGAIAGFIENGWEGMIDGWYGFRHQNSEGTGQAADLKSTQAAIDQINGKLNRVIEKTNEKFHQIEKEFSEVEGRIQDLEKYVEDTKIDLWSYNADVLVALENQHTIDLTDSEMNKLFERTRRQLRENAEDMGNGCFKIYHKCDNVCIESIRNGTYDHDVYRDEALNNRFQIKGVELKSGYKDWILWISFAISCFLLCVVLLGFIMWACQRGNIRCNICI</sequence>
<dbReference type="EMBL" id="M16743">
    <property type="protein sequence ID" value="AAA43149.1"/>
    <property type="molecule type" value="Genomic_RNA"/>
</dbReference>
<dbReference type="SMR" id="P12588"/>
<dbReference type="GlyCosmos" id="P12588">
    <property type="glycosylation" value="6 sites, No reported glycans"/>
</dbReference>
<dbReference type="GO" id="GO:0020002">
    <property type="term" value="C:host cell plasma membrane"/>
    <property type="evidence" value="ECO:0007669"/>
    <property type="project" value="UniProtKB-SubCell"/>
</dbReference>
<dbReference type="GO" id="GO:0016020">
    <property type="term" value="C:membrane"/>
    <property type="evidence" value="ECO:0007669"/>
    <property type="project" value="UniProtKB-KW"/>
</dbReference>
<dbReference type="GO" id="GO:0019031">
    <property type="term" value="C:viral envelope"/>
    <property type="evidence" value="ECO:0007669"/>
    <property type="project" value="UniProtKB-KW"/>
</dbReference>
<dbReference type="GO" id="GO:0055036">
    <property type="term" value="C:virion membrane"/>
    <property type="evidence" value="ECO:0007669"/>
    <property type="project" value="UniProtKB-SubCell"/>
</dbReference>
<dbReference type="GO" id="GO:0046789">
    <property type="term" value="F:host cell surface receptor binding"/>
    <property type="evidence" value="ECO:0007669"/>
    <property type="project" value="InterPro"/>
</dbReference>
<dbReference type="GO" id="GO:0075512">
    <property type="term" value="P:clathrin-dependent endocytosis of virus by host cell"/>
    <property type="evidence" value="ECO:0007669"/>
    <property type="project" value="UniProtKB-KW"/>
</dbReference>
<dbReference type="GO" id="GO:0039654">
    <property type="term" value="P:fusion of virus membrane with host endosome membrane"/>
    <property type="evidence" value="ECO:0007669"/>
    <property type="project" value="UniProtKB-KW"/>
</dbReference>
<dbReference type="GO" id="GO:0019064">
    <property type="term" value="P:fusion of virus membrane with host plasma membrane"/>
    <property type="evidence" value="ECO:0007669"/>
    <property type="project" value="InterPro"/>
</dbReference>
<dbReference type="GO" id="GO:0019062">
    <property type="term" value="P:virion attachment to host cell"/>
    <property type="evidence" value="ECO:0007669"/>
    <property type="project" value="UniProtKB-KW"/>
</dbReference>
<dbReference type="FunFam" id="3.90.20.10:FF:000001">
    <property type="entry name" value="Hemagglutinin"/>
    <property type="match status" value="1"/>
</dbReference>
<dbReference type="FunFam" id="3.90.209.20:FF:000001">
    <property type="entry name" value="Hemagglutinin"/>
    <property type="match status" value="1"/>
</dbReference>
<dbReference type="Gene3D" id="3.90.20.10">
    <property type="match status" value="1"/>
</dbReference>
<dbReference type="Gene3D" id="3.90.209.20">
    <property type="match status" value="1"/>
</dbReference>
<dbReference type="HAMAP" id="MF_04072">
    <property type="entry name" value="INFV_HEMA"/>
    <property type="match status" value="1"/>
</dbReference>
<dbReference type="InterPro" id="IPR008980">
    <property type="entry name" value="Capsid_hemagglutn"/>
</dbReference>
<dbReference type="InterPro" id="IPR013828">
    <property type="entry name" value="Hemagglutn_HA1_a/b_dom_sf"/>
</dbReference>
<dbReference type="InterPro" id="IPR000149">
    <property type="entry name" value="Hemagglutn_influenz_A"/>
</dbReference>
<dbReference type="InterPro" id="IPR001364">
    <property type="entry name" value="Hemagglutn_influenz_A/B"/>
</dbReference>
<dbReference type="Pfam" id="PF00509">
    <property type="entry name" value="Hemagglutinin"/>
    <property type="match status" value="1"/>
</dbReference>
<dbReference type="PRINTS" id="PR00330">
    <property type="entry name" value="HEMAGGLUTN1"/>
</dbReference>
<dbReference type="PRINTS" id="PR00329">
    <property type="entry name" value="HEMAGGLUTN12"/>
</dbReference>
<dbReference type="SUPFAM" id="SSF58064">
    <property type="entry name" value="Influenza hemagglutinin (stalk)"/>
    <property type="match status" value="1"/>
</dbReference>
<dbReference type="SUPFAM" id="SSF49818">
    <property type="entry name" value="Viral protein domain"/>
    <property type="match status" value="1"/>
</dbReference>
<gene>
    <name evidence="1" type="primary">HA</name>
</gene>
<accession>P12588</accession>
<accession>Q84018</accession>
<accession>Q89470</accession>
<protein>
    <recommendedName>
        <fullName evidence="1">Hemagglutinin</fullName>
    </recommendedName>
    <component>
        <recommendedName>
            <fullName evidence="1">Hemagglutinin HA1 chain</fullName>
        </recommendedName>
    </component>
    <component>
        <recommendedName>
            <fullName evidence="1">Hemagglutinin HA2 chain</fullName>
        </recommendedName>
    </component>
</protein>